<evidence type="ECO:0000255" key="1">
    <source>
        <dbReference type="HAMAP-Rule" id="MF_00268"/>
    </source>
</evidence>
<evidence type="ECO:0000256" key="2">
    <source>
        <dbReference type="SAM" id="MobiDB-lite"/>
    </source>
</evidence>
<organism>
    <name type="scientific">Xanthomonas axonopodis pv. citri (strain 306)</name>
    <dbReference type="NCBI Taxonomy" id="190486"/>
    <lineage>
        <taxon>Bacteria</taxon>
        <taxon>Pseudomonadati</taxon>
        <taxon>Pseudomonadota</taxon>
        <taxon>Gammaproteobacteria</taxon>
        <taxon>Lysobacterales</taxon>
        <taxon>Lysobacteraceae</taxon>
        <taxon>Xanthomonas</taxon>
    </lineage>
</organism>
<proteinExistence type="inferred from homology"/>
<comment type="function">
    <text evidence="1">Can catalyze the hydrolysis of ATP in the presence of single-stranded DNA, the ATP-dependent uptake of single-stranded DNA by duplex DNA, and the ATP-dependent hybridization of homologous single-stranded DNAs. It interacts with LexA causing its activation and leading to its autocatalytic cleavage.</text>
</comment>
<comment type="subcellular location">
    <subcellularLocation>
        <location evidence="1">Cytoplasm</location>
    </subcellularLocation>
</comment>
<comment type="similarity">
    <text evidence="1">Belongs to the RecA family.</text>
</comment>
<accession>P0A0W4</accession>
<accession>O34257</accession>
<keyword id="KW-0067">ATP-binding</keyword>
<keyword id="KW-0963">Cytoplasm</keyword>
<keyword id="KW-0227">DNA damage</keyword>
<keyword id="KW-0233">DNA recombination</keyword>
<keyword id="KW-0234">DNA repair</keyword>
<keyword id="KW-0238">DNA-binding</keyword>
<keyword id="KW-0547">Nucleotide-binding</keyword>
<keyword id="KW-0742">SOS response</keyword>
<sequence length="344" mass="37167">MDENKKRALSAALSQIEKQFGKGSVMRMGDRVIEAVEVIPTGSLMLDIALGIGGLPKGRVVEIYGPESSGKTTLTLQAIAECQKNGGTAAFIDAEHALDPIYAAKLGVNVDDLLLSQPDTGEQALEIADMLVRSGSVDIVVVDSVAALTPKAEIEGEMGDQLPGLQARLMSQALRKLTGNIKRSNTLVVFINQLRMKIGVMMPGQSPEVTTGGNALKFYASVRLDIRRIGAIKKGDEIIGNQTKIKVVKNKLAPPFKQVVTEILYGEGISREGELIDMGVEAKLVDKAGAWYSYGDERIGQGKDNARTYLRDNSQVATRLEAELREKFQPAEAPREAGDDEDKE</sequence>
<name>RECA_XANAC</name>
<protein>
    <recommendedName>
        <fullName evidence="1">Protein RecA</fullName>
    </recommendedName>
    <alternativeName>
        <fullName evidence="1">Recombinase A</fullName>
    </alternativeName>
</protein>
<feature type="chain" id="PRO_0000122901" description="Protein RecA">
    <location>
        <begin position="1"/>
        <end position="344"/>
    </location>
</feature>
<feature type="region of interest" description="Disordered" evidence="2">
    <location>
        <begin position="323"/>
        <end position="344"/>
    </location>
</feature>
<feature type="compositionally biased region" description="Basic and acidic residues" evidence="2">
    <location>
        <begin position="323"/>
        <end position="337"/>
    </location>
</feature>
<feature type="binding site" evidence="1">
    <location>
        <begin position="65"/>
        <end position="72"/>
    </location>
    <ligand>
        <name>ATP</name>
        <dbReference type="ChEBI" id="CHEBI:30616"/>
    </ligand>
</feature>
<dbReference type="EMBL" id="AE008923">
    <property type="protein sequence ID" value="AAM36607.1"/>
    <property type="molecule type" value="Genomic_DNA"/>
</dbReference>
<dbReference type="RefSeq" id="WP_011051113.1">
    <property type="nucleotide sequence ID" value="NC_003919.1"/>
</dbReference>
<dbReference type="SMR" id="P0A0W4"/>
<dbReference type="GeneID" id="66910890"/>
<dbReference type="KEGG" id="xac:XAC1740"/>
<dbReference type="eggNOG" id="COG0468">
    <property type="taxonomic scope" value="Bacteria"/>
</dbReference>
<dbReference type="HOGENOM" id="CLU_040469_1_2_6"/>
<dbReference type="Proteomes" id="UP000000576">
    <property type="component" value="Chromosome"/>
</dbReference>
<dbReference type="GO" id="GO:0005829">
    <property type="term" value="C:cytosol"/>
    <property type="evidence" value="ECO:0007669"/>
    <property type="project" value="TreeGrafter"/>
</dbReference>
<dbReference type="GO" id="GO:0005524">
    <property type="term" value="F:ATP binding"/>
    <property type="evidence" value="ECO:0007669"/>
    <property type="project" value="UniProtKB-UniRule"/>
</dbReference>
<dbReference type="GO" id="GO:0016887">
    <property type="term" value="F:ATP hydrolysis activity"/>
    <property type="evidence" value="ECO:0007669"/>
    <property type="project" value="InterPro"/>
</dbReference>
<dbReference type="GO" id="GO:0140664">
    <property type="term" value="F:ATP-dependent DNA damage sensor activity"/>
    <property type="evidence" value="ECO:0007669"/>
    <property type="project" value="InterPro"/>
</dbReference>
<dbReference type="GO" id="GO:0003684">
    <property type="term" value="F:damaged DNA binding"/>
    <property type="evidence" value="ECO:0007669"/>
    <property type="project" value="UniProtKB-UniRule"/>
</dbReference>
<dbReference type="GO" id="GO:0003697">
    <property type="term" value="F:single-stranded DNA binding"/>
    <property type="evidence" value="ECO:0007669"/>
    <property type="project" value="UniProtKB-UniRule"/>
</dbReference>
<dbReference type="GO" id="GO:0006310">
    <property type="term" value="P:DNA recombination"/>
    <property type="evidence" value="ECO:0007669"/>
    <property type="project" value="UniProtKB-UniRule"/>
</dbReference>
<dbReference type="GO" id="GO:0006281">
    <property type="term" value="P:DNA repair"/>
    <property type="evidence" value="ECO:0007669"/>
    <property type="project" value="UniProtKB-UniRule"/>
</dbReference>
<dbReference type="GO" id="GO:0009432">
    <property type="term" value="P:SOS response"/>
    <property type="evidence" value="ECO:0007669"/>
    <property type="project" value="UniProtKB-UniRule"/>
</dbReference>
<dbReference type="CDD" id="cd00983">
    <property type="entry name" value="RecA"/>
    <property type="match status" value="1"/>
</dbReference>
<dbReference type="FunFam" id="3.40.50.300:FF:000087">
    <property type="entry name" value="Recombinase RecA"/>
    <property type="match status" value="1"/>
</dbReference>
<dbReference type="Gene3D" id="3.40.50.300">
    <property type="entry name" value="P-loop containing nucleotide triphosphate hydrolases"/>
    <property type="match status" value="1"/>
</dbReference>
<dbReference type="HAMAP" id="MF_00268">
    <property type="entry name" value="RecA"/>
    <property type="match status" value="1"/>
</dbReference>
<dbReference type="InterPro" id="IPR003593">
    <property type="entry name" value="AAA+_ATPase"/>
</dbReference>
<dbReference type="InterPro" id="IPR013765">
    <property type="entry name" value="DNA_recomb/repair_RecA"/>
</dbReference>
<dbReference type="InterPro" id="IPR020584">
    <property type="entry name" value="DNA_recomb/repair_RecA_CS"/>
</dbReference>
<dbReference type="InterPro" id="IPR027417">
    <property type="entry name" value="P-loop_NTPase"/>
</dbReference>
<dbReference type="InterPro" id="IPR049261">
    <property type="entry name" value="RecA-like_C"/>
</dbReference>
<dbReference type="InterPro" id="IPR049428">
    <property type="entry name" value="RecA-like_N"/>
</dbReference>
<dbReference type="InterPro" id="IPR020588">
    <property type="entry name" value="RecA_ATP-bd"/>
</dbReference>
<dbReference type="InterPro" id="IPR023400">
    <property type="entry name" value="RecA_C_sf"/>
</dbReference>
<dbReference type="InterPro" id="IPR020587">
    <property type="entry name" value="RecA_monomer-monomer_interface"/>
</dbReference>
<dbReference type="NCBIfam" id="TIGR02012">
    <property type="entry name" value="tigrfam_recA"/>
    <property type="match status" value="1"/>
</dbReference>
<dbReference type="PANTHER" id="PTHR45900:SF1">
    <property type="entry name" value="MITOCHONDRIAL DNA REPAIR PROTEIN RECA HOMOLOG-RELATED"/>
    <property type="match status" value="1"/>
</dbReference>
<dbReference type="PANTHER" id="PTHR45900">
    <property type="entry name" value="RECA"/>
    <property type="match status" value="1"/>
</dbReference>
<dbReference type="Pfam" id="PF00154">
    <property type="entry name" value="RecA"/>
    <property type="match status" value="1"/>
</dbReference>
<dbReference type="Pfam" id="PF21096">
    <property type="entry name" value="RecA_C"/>
    <property type="match status" value="1"/>
</dbReference>
<dbReference type="PRINTS" id="PR00142">
    <property type="entry name" value="RECA"/>
</dbReference>
<dbReference type="SMART" id="SM00382">
    <property type="entry name" value="AAA"/>
    <property type="match status" value="1"/>
</dbReference>
<dbReference type="SUPFAM" id="SSF52540">
    <property type="entry name" value="P-loop containing nucleoside triphosphate hydrolases"/>
    <property type="match status" value="1"/>
</dbReference>
<dbReference type="SUPFAM" id="SSF54752">
    <property type="entry name" value="RecA protein, C-terminal domain"/>
    <property type="match status" value="1"/>
</dbReference>
<dbReference type="PROSITE" id="PS00321">
    <property type="entry name" value="RECA_1"/>
    <property type="match status" value="1"/>
</dbReference>
<dbReference type="PROSITE" id="PS50162">
    <property type="entry name" value="RECA_2"/>
    <property type="match status" value="1"/>
</dbReference>
<dbReference type="PROSITE" id="PS50163">
    <property type="entry name" value="RECA_3"/>
    <property type="match status" value="1"/>
</dbReference>
<reference key="1">
    <citation type="journal article" date="2002" name="Nature">
        <title>Comparison of the genomes of two Xanthomonas pathogens with differing host specificities.</title>
        <authorList>
            <person name="da Silva A.C.R."/>
            <person name="Ferro J.A."/>
            <person name="Reinach F.C."/>
            <person name="Farah C.S."/>
            <person name="Furlan L.R."/>
            <person name="Quaggio R.B."/>
            <person name="Monteiro-Vitorello C.B."/>
            <person name="Van Sluys M.A."/>
            <person name="Almeida N.F. Jr."/>
            <person name="Alves L.M.C."/>
            <person name="do Amaral A.M."/>
            <person name="Bertolini M.C."/>
            <person name="Camargo L.E.A."/>
            <person name="Camarotte G."/>
            <person name="Cannavan F."/>
            <person name="Cardozo J."/>
            <person name="Chambergo F."/>
            <person name="Ciapina L.P."/>
            <person name="Cicarelli R.M.B."/>
            <person name="Coutinho L.L."/>
            <person name="Cursino-Santos J.R."/>
            <person name="El-Dorry H."/>
            <person name="Faria J.B."/>
            <person name="Ferreira A.J.S."/>
            <person name="Ferreira R.C.C."/>
            <person name="Ferro M.I.T."/>
            <person name="Formighieri E.F."/>
            <person name="Franco M.C."/>
            <person name="Greggio C.C."/>
            <person name="Gruber A."/>
            <person name="Katsuyama A.M."/>
            <person name="Kishi L.T."/>
            <person name="Leite R.P."/>
            <person name="Lemos E.G.M."/>
            <person name="Lemos M.V.F."/>
            <person name="Locali E.C."/>
            <person name="Machado M.A."/>
            <person name="Madeira A.M.B.N."/>
            <person name="Martinez-Rossi N.M."/>
            <person name="Martins E.C."/>
            <person name="Meidanis J."/>
            <person name="Menck C.F.M."/>
            <person name="Miyaki C.Y."/>
            <person name="Moon D.H."/>
            <person name="Moreira L.M."/>
            <person name="Novo M.T.M."/>
            <person name="Okura V.K."/>
            <person name="Oliveira M.C."/>
            <person name="Oliveira V.R."/>
            <person name="Pereira H.A."/>
            <person name="Rossi A."/>
            <person name="Sena J.A.D."/>
            <person name="Silva C."/>
            <person name="de Souza R.F."/>
            <person name="Spinola L.A.F."/>
            <person name="Takita M.A."/>
            <person name="Tamura R.E."/>
            <person name="Teixeira E.C."/>
            <person name="Tezza R.I.D."/>
            <person name="Trindade dos Santos M."/>
            <person name="Truffi D."/>
            <person name="Tsai S.M."/>
            <person name="White F.F."/>
            <person name="Setubal J.C."/>
            <person name="Kitajima J.P."/>
        </authorList>
    </citation>
    <scope>NUCLEOTIDE SEQUENCE [LARGE SCALE GENOMIC DNA]</scope>
    <source>
        <strain>306</strain>
    </source>
</reference>
<gene>
    <name evidence="1" type="primary">recA</name>
    <name type="ordered locus">XAC1740</name>
</gene>